<comment type="function">
    <text evidence="1">This b-type cytochrome is tightly associated with the reaction center of photosystem II (PSII). PSII is a light-driven water:plastoquinone oxidoreductase that uses light energy to abstract electrons from H(2)O, generating O(2) and a proton gradient subsequently used for ATP formation. It consists of a core antenna complex that captures photons, and an electron transfer chain that converts photonic excitation into a charge separation.</text>
</comment>
<comment type="cofactor">
    <cofactor evidence="1">
        <name>heme b</name>
        <dbReference type="ChEBI" id="CHEBI:60344"/>
    </cofactor>
    <text evidence="1">With its partner (PsbF) binds heme. PSII binds additional chlorophylls, carotenoids and specific lipids.</text>
</comment>
<comment type="subunit">
    <text evidence="1">Heterodimer of an alpha subunit and a beta subunit. PSII is composed of 1 copy each of membrane proteins PsbA, PsbB, PsbC, PsbD, PsbE, PsbF, PsbH, PsbI, PsbJ, PsbK, PsbL, PsbM, PsbT, PsbX, PsbY, PsbZ, Psb30/Ycf12, peripheral proteins PsbO, CyanoQ (PsbQ), PsbU, PsbV and a large number of cofactors. It forms dimeric complexes.</text>
</comment>
<comment type="subcellular location">
    <subcellularLocation>
        <location evidence="1">Cellular thylakoid membrane</location>
        <topology evidence="1">Single-pass membrane protein</topology>
    </subcellularLocation>
</comment>
<comment type="similarity">
    <text evidence="1">Belongs to the PsbE/PsbF family.</text>
</comment>
<accession>Q2JS34</accession>
<feature type="chain" id="PRO_0000233221" description="Cytochrome b559 subunit alpha">
    <location>
        <begin position="1"/>
        <end position="81"/>
    </location>
</feature>
<feature type="transmembrane region" description="Helical" evidence="1">
    <location>
        <begin position="21"/>
        <end position="35"/>
    </location>
</feature>
<feature type="binding site" description="axial binding residue" evidence="1">
    <location>
        <position position="23"/>
    </location>
    <ligand>
        <name>heme</name>
        <dbReference type="ChEBI" id="CHEBI:30413"/>
        <note>ligand shared with beta subunit</note>
    </ligand>
    <ligandPart>
        <name>Fe</name>
        <dbReference type="ChEBI" id="CHEBI:18248"/>
    </ligandPart>
</feature>
<keyword id="KW-0249">Electron transport</keyword>
<keyword id="KW-0349">Heme</keyword>
<keyword id="KW-0408">Iron</keyword>
<keyword id="KW-0472">Membrane</keyword>
<keyword id="KW-0479">Metal-binding</keyword>
<keyword id="KW-0602">Photosynthesis</keyword>
<keyword id="KW-0604">Photosystem II</keyword>
<keyword id="KW-0793">Thylakoid</keyword>
<keyword id="KW-0812">Transmembrane</keyword>
<keyword id="KW-1133">Transmembrane helix</keyword>
<keyword id="KW-0813">Transport</keyword>
<name>PSBE_SYNJA</name>
<reference key="1">
    <citation type="journal article" date="2007" name="ISME J.">
        <title>Population level functional diversity in a microbial community revealed by comparative genomic and metagenomic analyses.</title>
        <authorList>
            <person name="Bhaya D."/>
            <person name="Grossman A.R."/>
            <person name="Steunou A.-S."/>
            <person name="Khuri N."/>
            <person name="Cohan F.M."/>
            <person name="Hamamura N."/>
            <person name="Melendrez M.C."/>
            <person name="Bateson M.M."/>
            <person name="Ward D.M."/>
            <person name="Heidelberg J.F."/>
        </authorList>
    </citation>
    <scope>NUCLEOTIDE SEQUENCE [LARGE SCALE GENOMIC DNA]</scope>
    <source>
        <strain>JA-3-3Ab</strain>
    </source>
</reference>
<evidence type="ECO:0000255" key="1">
    <source>
        <dbReference type="HAMAP-Rule" id="MF_00642"/>
    </source>
</evidence>
<sequence>MAGNTGERPFVDIITSVRYWVIHALTIPALFLAGWLFVSTGLAYDIFGTPRPNEYFTAERQELPIVSDRFNALEQLEKLTR</sequence>
<dbReference type="EMBL" id="CP000239">
    <property type="protein sequence ID" value="ABD00552.1"/>
    <property type="molecule type" value="Genomic_DNA"/>
</dbReference>
<dbReference type="RefSeq" id="WP_011431225.1">
    <property type="nucleotide sequence ID" value="NC_007775.1"/>
</dbReference>
<dbReference type="SMR" id="Q2JS34"/>
<dbReference type="STRING" id="321327.CYA_2430"/>
<dbReference type="KEGG" id="cya:CYA_2430"/>
<dbReference type="eggNOG" id="ENOG5032RR6">
    <property type="taxonomic scope" value="Bacteria"/>
</dbReference>
<dbReference type="HOGENOM" id="CLU_194095_0_0_3"/>
<dbReference type="OrthoDB" id="514620at2"/>
<dbReference type="Proteomes" id="UP000008818">
    <property type="component" value="Chromosome"/>
</dbReference>
<dbReference type="GO" id="GO:0009539">
    <property type="term" value="C:photosystem II reaction center"/>
    <property type="evidence" value="ECO:0007669"/>
    <property type="project" value="InterPro"/>
</dbReference>
<dbReference type="GO" id="GO:0031676">
    <property type="term" value="C:plasma membrane-derived thylakoid membrane"/>
    <property type="evidence" value="ECO:0007669"/>
    <property type="project" value="UniProtKB-SubCell"/>
</dbReference>
<dbReference type="GO" id="GO:0009055">
    <property type="term" value="F:electron transfer activity"/>
    <property type="evidence" value="ECO:0007669"/>
    <property type="project" value="UniProtKB-UniRule"/>
</dbReference>
<dbReference type="GO" id="GO:0020037">
    <property type="term" value="F:heme binding"/>
    <property type="evidence" value="ECO:0007669"/>
    <property type="project" value="InterPro"/>
</dbReference>
<dbReference type="GO" id="GO:0005506">
    <property type="term" value="F:iron ion binding"/>
    <property type="evidence" value="ECO:0007669"/>
    <property type="project" value="UniProtKB-UniRule"/>
</dbReference>
<dbReference type="GO" id="GO:0009767">
    <property type="term" value="P:photosynthetic electron transport chain"/>
    <property type="evidence" value="ECO:0007669"/>
    <property type="project" value="InterPro"/>
</dbReference>
<dbReference type="Gene3D" id="1.20.5.860">
    <property type="entry name" value="Photosystem II cytochrome b559, alpha subunit"/>
    <property type="match status" value="1"/>
</dbReference>
<dbReference type="HAMAP" id="MF_00642">
    <property type="entry name" value="PSII_PsbE"/>
    <property type="match status" value="1"/>
</dbReference>
<dbReference type="InterPro" id="IPR006217">
    <property type="entry name" value="PSII_cyt_b559_asu"/>
</dbReference>
<dbReference type="InterPro" id="IPR037025">
    <property type="entry name" value="PSII_cyt_b559_asu_sf"/>
</dbReference>
<dbReference type="InterPro" id="IPR006216">
    <property type="entry name" value="PSII_cyt_b559_CS"/>
</dbReference>
<dbReference type="InterPro" id="IPR013081">
    <property type="entry name" value="PSII_cyt_b559_N"/>
</dbReference>
<dbReference type="InterPro" id="IPR013082">
    <property type="entry name" value="PSII_cytb559_asu_lum"/>
</dbReference>
<dbReference type="NCBIfam" id="TIGR01332">
    <property type="entry name" value="cyt_b559_alpha"/>
    <property type="match status" value="1"/>
</dbReference>
<dbReference type="PANTHER" id="PTHR33391">
    <property type="entry name" value="CYTOCHROME B559 SUBUNIT BETA-RELATED"/>
    <property type="match status" value="1"/>
</dbReference>
<dbReference type="PANTHER" id="PTHR33391:SF9">
    <property type="entry name" value="CYTOCHROME B559 SUBUNIT BETA-RELATED"/>
    <property type="match status" value="1"/>
</dbReference>
<dbReference type="Pfam" id="PF00283">
    <property type="entry name" value="Cytochrom_B559"/>
    <property type="match status" value="1"/>
</dbReference>
<dbReference type="Pfam" id="PF00284">
    <property type="entry name" value="Cytochrom_B559a"/>
    <property type="match status" value="1"/>
</dbReference>
<dbReference type="PIRSF" id="PIRSF000036">
    <property type="entry name" value="PsbE"/>
    <property type="match status" value="1"/>
</dbReference>
<dbReference type="SUPFAM" id="SSF161045">
    <property type="entry name" value="Cytochrome b559 subunits"/>
    <property type="match status" value="1"/>
</dbReference>
<dbReference type="PROSITE" id="PS00537">
    <property type="entry name" value="CYTOCHROME_B559"/>
    <property type="match status" value="1"/>
</dbReference>
<gene>
    <name evidence="1" type="primary">psbE</name>
    <name type="ordered locus">CYA_2430</name>
</gene>
<organism>
    <name type="scientific">Synechococcus sp. (strain JA-3-3Ab)</name>
    <name type="common">Cyanobacteria bacterium Yellowstone A-Prime</name>
    <dbReference type="NCBI Taxonomy" id="321327"/>
    <lineage>
        <taxon>Bacteria</taxon>
        <taxon>Bacillati</taxon>
        <taxon>Cyanobacteriota</taxon>
        <taxon>Cyanophyceae</taxon>
        <taxon>Synechococcales</taxon>
        <taxon>Synechococcaceae</taxon>
        <taxon>Synechococcus</taxon>
    </lineage>
</organism>
<protein>
    <recommendedName>
        <fullName evidence="1">Cytochrome b559 subunit alpha</fullName>
    </recommendedName>
    <alternativeName>
        <fullName evidence="1">PSII reaction center subunit V</fullName>
    </alternativeName>
</protein>
<proteinExistence type="inferred from homology"/>